<keyword id="KW-1185">Reference proteome</keyword>
<keyword id="KW-0687">Ribonucleoprotein</keyword>
<keyword id="KW-0689">Ribosomal protein</keyword>
<keyword id="KW-0694">RNA-binding</keyword>
<keyword id="KW-0699">rRNA-binding</keyword>
<evidence type="ECO:0000255" key="1">
    <source>
        <dbReference type="HAMAP-Rule" id="MF_01307"/>
    </source>
</evidence>
<evidence type="ECO:0000305" key="2"/>
<organism>
    <name type="scientific">Pseudomonas putida (strain ATCC 47054 / DSM 6125 / CFBP 8728 / NCIMB 11950 / KT2440)</name>
    <dbReference type="NCBI Taxonomy" id="160488"/>
    <lineage>
        <taxon>Bacteria</taxon>
        <taxon>Pseudomonadati</taxon>
        <taxon>Pseudomonadota</taxon>
        <taxon>Gammaproteobacteria</taxon>
        <taxon>Pseudomonadales</taxon>
        <taxon>Pseudomonadaceae</taxon>
        <taxon>Pseudomonas</taxon>
    </lineage>
</organism>
<gene>
    <name evidence="1" type="primary">rpsE</name>
    <name type="ordered locus">PP_0471</name>
</gene>
<dbReference type="EMBL" id="AE015451">
    <property type="protein sequence ID" value="AAN66101.1"/>
    <property type="molecule type" value="Genomic_DNA"/>
</dbReference>
<dbReference type="RefSeq" id="NP_742637.1">
    <property type="nucleotide sequence ID" value="NC_002947.4"/>
</dbReference>
<dbReference type="RefSeq" id="WP_003255465.1">
    <property type="nucleotide sequence ID" value="NZ_CP169744.1"/>
</dbReference>
<dbReference type="SMR" id="Q88QL8"/>
<dbReference type="STRING" id="160488.PP_0471"/>
<dbReference type="PaxDb" id="160488-PP_0471"/>
<dbReference type="GeneID" id="97165996"/>
<dbReference type="KEGG" id="ppu:PP_0471"/>
<dbReference type="PATRIC" id="fig|160488.4.peg.503"/>
<dbReference type="eggNOG" id="COG0098">
    <property type="taxonomic scope" value="Bacteria"/>
</dbReference>
<dbReference type="HOGENOM" id="CLU_065898_2_2_6"/>
<dbReference type="OrthoDB" id="9809045at2"/>
<dbReference type="PhylomeDB" id="Q88QL8"/>
<dbReference type="BioCyc" id="PPUT160488:G1G01-517-MONOMER"/>
<dbReference type="Proteomes" id="UP000000556">
    <property type="component" value="Chromosome"/>
</dbReference>
<dbReference type="GO" id="GO:0015935">
    <property type="term" value="C:small ribosomal subunit"/>
    <property type="evidence" value="ECO:0007669"/>
    <property type="project" value="InterPro"/>
</dbReference>
<dbReference type="GO" id="GO:0019843">
    <property type="term" value="F:rRNA binding"/>
    <property type="evidence" value="ECO:0007669"/>
    <property type="project" value="UniProtKB-UniRule"/>
</dbReference>
<dbReference type="GO" id="GO:0003735">
    <property type="term" value="F:structural constituent of ribosome"/>
    <property type="evidence" value="ECO:0007669"/>
    <property type="project" value="InterPro"/>
</dbReference>
<dbReference type="GO" id="GO:0006412">
    <property type="term" value="P:translation"/>
    <property type="evidence" value="ECO:0007669"/>
    <property type="project" value="UniProtKB-UniRule"/>
</dbReference>
<dbReference type="FunFam" id="3.30.160.20:FF:000001">
    <property type="entry name" value="30S ribosomal protein S5"/>
    <property type="match status" value="1"/>
</dbReference>
<dbReference type="FunFam" id="3.30.230.10:FF:000002">
    <property type="entry name" value="30S ribosomal protein S5"/>
    <property type="match status" value="1"/>
</dbReference>
<dbReference type="Gene3D" id="3.30.160.20">
    <property type="match status" value="1"/>
</dbReference>
<dbReference type="Gene3D" id="3.30.230.10">
    <property type="match status" value="1"/>
</dbReference>
<dbReference type="HAMAP" id="MF_01307_B">
    <property type="entry name" value="Ribosomal_uS5_B"/>
    <property type="match status" value="1"/>
</dbReference>
<dbReference type="InterPro" id="IPR020568">
    <property type="entry name" value="Ribosomal_Su5_D2-typ_SF"/>
</dbReference>
<dbReference type="InterPro" id="IPR000851">
    <property type="entry name" value="Ribosomal_uS5"/>
</dbReference>
<dbReference type="InterPro" id="IPR005712">
    <property type="entry name" value="Ribosomal_uS5_bac-type"/>
</dbReference>
<dbReference type="InterPro" id="IPR005324">
    <property type="entry name" value="Ribosomal_uS5_C"/>
</dbReference>
<dbReference type="InterPro" id="IPR013810">
    <property type="entry name" value="Ribosomal_uS5_N"/>
</dbReference>
<dbReference type="InterPro" id="IPR018192">
    <property type="entry name" value="Ribosomal_uS5_N_CS"/>
</dbReference>
<dbReference type="InterPro" id="IPR014721">
    <property type="entry name" value="Ribsml_uS5_D2-typ_fold_subgr"/>
</dbReference>
<dbReference type="NCBIfam" id="TIGR01021">
    <property type="entry name" value="rpsE_bact"/>
    <property type="match status" value="1"/>
</dbReference>
<dbReference type="PANTHER" id="PTHR48432">
    <property type="entry name" value="S5 DRBM DOMAIN-CONTAINING PROTEIN"/>
    <property type="match status" value="1"/>
</dbReference>
<dbReference type="PANTHER" id="PTHR48432:SF1">
    <property type="entry name" value="S5 DRBM DOMAIN-CONTAINING PROTEIN"/>
    <property type="match status" value="1"/>
</dbReference>
<dbReference type="Pfam" id="PF00333">
    <property type="entry name" value="Ribosomal_S5"/>
    <property type="match status" value="1"/>
</dbReference>
<dbReference type="Pfam" id="PF03719">
    <property type="entry name" value="Ribosomal_S5_C"/>
    <property type="match status" value="1"/>
</dbReference>
<dbReference type="SUPFAM" id="SSF54768">
    <property type="entry name" value="dsRNA-binding domain-like"/>
    <property type="match status" value="1"/>
</dbReference>
<dbReference type="SUPFAM" id="SSF54211">
    <property type="entry name" value="Ribosomal protein S5 domain 2-like"/>
    <property type="match status" value="1"/>
</dbReference>
<dbReference type="PROSITE" id="PS00585">
    <property type="entry name" value="RIBOSOMAL_S5"/>
    <property type="match status" value="1"/>
</dbReference>
<dbReference type="PROSITE" id="PS50881">
    <property type="entry name" value="S5_DSRBD"/>
    <property type="match status" value="1"/>
</dbReference>
<proteinExistence type="inferred from homology"/>
<accession>Q88QL8</accession>
<name>RS5_PSEPK</name>
<protein>
    <recommendedName>
        <fullName evidence="1">Small ribosomal subunit protein uS5</fullName>
    </recommendedName>
    <alternativeName>
        <fullName evidence="2">30S ribosomal protein S5</fullName>
    </alternativeName>
</protein>
<feature type="chain" id="PRO_0000131575" description="Small ribosomal subunit protein uS5">
    <location>
        <begin position="1"/>
        <end position="166"/>
    </location>
</feature>
<feature type="domain" description="S5 DRBM" evidence="1">
    <location>
        <begin position="12"/>
        <end position="75"/>
    </location>
</feature>
<reference key="1">
    <citation type="journal article" date="2002" name="Environ. Microbiol.">
        <title>Complete genome sequence and comparative analysis of the metabolically versatile Pseudomonas putida KT2440.</title>
        <authorList>
            <person name="Nelson K.E."/>
            <person name="Weinel C."/>
            <person name="Paulsen I.T."/>
            <person name="Dodson R.J."/>
            <person name="Hilbert H."/>
            <person name="Martins dos Santos V.A.P."/>
            <person name="Fouts D.E."/>
            <person name="Gill S.R."/>
            <person name="Pop M."/>
            <person name="Holmes M."/>
            <person name="Brinkac L.M."/>
            <person name="Beanan M.J."/>
            <person name="DeBoy R.T."/>
            <person name="Daugherty S.C."/>
            <person name="Kolonay J.F."/>
            <person name="Madupu R."/>
            <person name="Nelson W.C."/>
            <person name="White O."/>
            <person name="Peterson J.D."/>
            <person name="Khouri H.M."/>
            <person name="Hance I."/>
            <person name="Chris Lee P."/>
            <person name="Holtzapple E.K."/>
            <person name="Scanlan D."/>
            <person name="Tran K."/>
            <person name="Moazzez A."/>
            <person name="Utterback T.R."/>
            <person name="Rizzo M."/>
            <person name="Lee K."/>
            <person name="Kosack D."/>
            <person name="Moestl D."/>
            <person name="Wedler H."/>
            <person name="Lauber J."/>
            <person name="Stjepandic D."/>
            <person name="Hoheisel J."/>
            <person name="Straetz M."/>
            <person name="Heim S."/>
            <person name="Kiewitz C."/>
            <person name="Eisen J.A."/>
            <person name="Timmis K.N."/>
            <person name="Duesterhoeft A."/>
            <person name="Tuemmler B."/>
            <person name="Fraser C.M."/>
        </authorList>
    </citation>
    <scope>NUCLEOTIDE SEQUENCE [LARGE SCALE GENOMIC DNA]</scope>
    <source>
        <strain>ATCC 47054 / DSM 6125 / CFBP 8728 / NCIMB 11950 / KT2440</strain>
    </source>
</reference>
<sequence>MANNDQKRDEGYIEKLVQVNRVAKTVKGGRIFTFTALTVVGDGKGRVGFGRGKSREVPAAIQKAMEAARRNMIQVDLKGTTLQYATKAAHGASKVYMQPASEGTGIIAGGAMRAVLEVAGVQNVLAKCYGSTNPVNVVYATFKGLKAMQSPESIAAKRGKSVEEIF</sequence>
<comment type="function">
    <text evidence="1">With S4 and S12 plays an important role in translational accuracy.</text>
</comment>
<comment type="function">
    <text evidence="1">Located at the back of the 30S subunit body where it stabilizes the conformation of the head with respect to the body.</text>
</comment>
<comment type="subunit">
    <text evidence="1">Part of the 30S ribosomal subunit. Contacts proteins S4 and S8.</text>
</comment>
<comment type="domain">
    <text>The N-terminal domain interacts with the head of the 30S subunit; the C-terminal domain interacts with the body and contacts protein S4. The interaction surface between S4 and S5 is involved in control of translational fidelity.</text>
</comment>
<comment type="similarity">
    <text evidence="1">Belongs to the universal ribosomal protein uS5 family.</text>
</comment>